<dbReference type="EC" id="2.6.1.9" evidence="1"/>
<dbReference type="EMBL" id="CP000668">
    <property type="protein sequence ID" value="ABP39816.1"/>
    <property type="molecule type" value="Genomic_DNA"/>
</dbReference>
<dbReference type="RefSeq" id="WP_002211894.1">
    <property type="nucleotide sequence ID" value="NZ_CP009715.1"/>
</dbReference>
<dbReference type="SMR" id="A4TKK4"/>
<dbReference type="GeneID" id="57977021"/>
<dbReference type="KEGG" id="ypp:YPDSF_1429"/>
<dbReference type="PATRIC" id="fig|386656.14.peg.2355"/>
<dbReference type="UniPathway" id="UPA00031">
    <property type="reaction ID" value="UER00012"/>
</dbReference>
<dbReference type="GO" id="GO:0004400">
    <property type="term" value="F:histidinol-phosphate transaminase activity"/>
    <property type="evidence" value="ECO:0007669"/>
    <property type="project" value="UniProtKB-UniRule"/>
</dbReference>
<dbReference type="GO" id="GO:0030170">
    <property type="term" value="F:pyridoxal phosphate binding"/>
    <property type="evidence" value="ECO:0007669"/>
    <property type="project" value="InterPro"/>
</dbReference>
<dbReference type="GO" id="GO:0000105">
    <property type="term" value="P:L-histidine biosynthetic process"/>
    <property type="evidence" value="ECO:0007669"/>
    <property type="project" value="UniProtKB-UniRule"/>
</dbReference>
<dbReference type="CDD" id="cd00609">
    <property type="entry name" value="AAT_like"/>
    <property type="match status" value="1"/>
</dbReference>
<dbReference type="Gene3D" id="3.90.1150.10">
    <property type="entry name" value="Aspartate Aminotransferase, domain 1"/>
    <property type="match status" value="1"/>
</dbReference>
<dbReference type="Gene3D" id="3.40.640.10">
    <property type="entry name" value="Type I PLP-dependent aspartate aminotransferase-like (Major domain)"/>
    <property type="match status" value="1"/>
</dbReference>
<dbReference type="HAMAP" id="MF_01023">
    <property type="entry name" value="HisC_aminotrans_2"/>
    <property type="match status" value="1"/>
</dbReference>
<dbReference type="InterPro" id="IPR001917">
    <property type="entry name" value="Aminotrans_II_pyridoxalP_BS"/>
</dbReference>
<dbReference type="InterPro" id="IPR004839">
    <property type="entry name" value="Aminotransferase_I/II_large"/>
</dbReference>
<dbReference type="InterPro" id="IPR005861">
    <property type="entry name" value="HisP_aminotrans"/>
</dbReference>
<dbReference type="InterPro" id="IPR015424">
    <property type="entry name" value="PyrdxlP-dep_Trfase"/>
</dbReference>
<dbReference type="InterPro" id="IPR015421">
    <property type="entry name" value="PyrdxlP-dep_Trfase_major"/>
</dbReference>
<dbReference type="InterPro" id="IPR015422">
    <property type="entry name" value="PyrdxlP-dep_Trfase_small"/>
</dbReference>
<dbReference type="NCBIfam" id="TIGR01141">
    <property type="entry name" value="hisC"/>
    <property type="match status" value="1"/>
</dbReference>
<dbReference type="PANTHER" id="PTHR42885:SF2">
    <property type="entry name" value="HISTIDINOL-PHOSPHATE AMINOTRANSFERASE"/>
    <property type="match status" value="1"/>
</dbReference>
<dbReference type="PANTHER" id="PTHR42885">
    <property type="entry name" value="HISTIDINOL-PHOSPHATE AMINOTRANSFERASE-RELATED"/>
    <property type="match status" value="1"/>
</dbReference>
<dbReference type="Pfam" id="PF00155">
    <property type="entry name" value="Aminotran_1_2"/>
    <property type="match status" value="1"/>
</dbReference>
<dbReference type="SUPFAM" id="SSF53383">
    <property type="entry name" value="PLP-dependent transferases"/>
    <property type="match status" value="1"/>
</dbReference>
<dbReference type="PROSITE" id="PS00599">
    <property type="entry name" value="AA_TRANSFER_CLASS_2"/>
    <property type="match status" value="1"/>
</dbReference>
<gene>
    <name evidence="1" type="primary">hisC</name>
    <name type="ordered locus">YPDSF_1429</name>
</gene>
<organism>
    <name type="scientific">Yersinia pestis (strain Pestoides F)</name>
    <dbReference type="NCBI Taxonomy" id="386656"/>
    <lineage>
        <taxon>Bacteria</taxon>
        <taxon>Pseudomonadati</taxon>
        <taxon>Pseudomonadota</taxon>
        <taxon>Gammaproteobacteria</taxon>
        <taxon>Enterobacterales</taxon>
        <taxon>Yersiniaceae</taxon>
        <taxon>Yersinia</taxon>
    </lineage>
</organism>
<name>HIS8_YERPP</name>
<accession>A4TKK4</accession>
<protein>
    <recommendedName>
        <fullName evidence="1">Histidinol-phosphate aminotransferase</fullName>
        <ecNumber evidence="1">2.6.1.9</ecNumber>
    </recommendedName>
    <alternativeName>
        <fullName evidence="1">Imidazole acetol-phosphate transaminase</fullName>
    </alternativeName>
</protein>
<evidence type="ECO:0000255" key="1">
    <source>
        <dbReference type="HAMAP-Rule" id="MF_01023"/>
    </source>
</evidence>
<evidence type="ECO:0000256" key="2">
    <source>
        <dbReference type="SAM" id="MobiDB-lite"/>
    </source>
</evidence>
<comment type="catalytic activity">
    <reaction evidence="1">
        <text>L-histidinol phosphate + 2-oxoglutarate = 3-(imidazol-4-yl)-2-oxopropyl phosphate + L-glutamate</text>
        <dbReference type="Rhea" id="RHEA:23744"/>
        <dbReference type="ChEBI" id="CHEBI:16810"/>
        <dbReference type="ChEBI" id="CHEBI:29985"/>
        <dbReference type="ChEBI" id="CHEBI:57766"/>
        <dbReference type="ChEBI" id="CHEBI:57980"/>
        <dbReference type="EC" id="2.6.1.9"/>
    </reaction>
</comment>
<comment type="cofactor">
    <cofactor evidence="1">
        <name>pyridoxal 5'-phosphate</name>
        <dbReference type="ChEBI" id="CHEBI:597326"/>
    </cofactor>
</comment>
<comment type="pathway">
    <text evidence="1">Amino-acid biosynthesis; L-histidine biosynthesis; L-histidine from 5-phospho-alpha-D-ribose 1-diphosphate: step 7/9.</text>
</comment>
<comment type="subunit">
    <text evidence="1">Homodimer.</text>
</comment>
<comment type="similarity">
    <text evidence="1">Belongs to the class-II pyridoxal-phosphate-dependent aminotransferase family. Histidinol-phosphate aminotransferase subfamily.</text>
</comment>
<proteinExistence type="inferred from homology"/>
<reference key="1">
    <citation type="submission" date="2007-02" db="EMBL/GenBank/DDBJ databases">
        <title>Complete sequence of chromosome of Yersinia pestis Pestoides F.</title>
        <authorList>
            <consortium name="US DOE Joint Genome Institute"/>
            <person name="Copeland A."/>
            <person name="Lucas S."/>
            <person name="Lapidus A."/>
            <person name="Barry K."/>
            <person name="Detter J.C."/>
            <person name="Glavina del Rio T."/>
            <person name="Hammon N."/>
            <person name="Israni S."/>
            <person name="Dalin E."/>
            <person name="Tice H."/>
            <person name="Pitluck S."/>
            <person name="Di Bartolo G."/>
            <person name="Chain P."/>
            <person name="Malfatti S."/>
            <person name="Shin M."/>
            <person name="Vergez L."/>
            <person name="Schmutz J."/>
            <person name="Larimer F."/>
            <person name="Land M."/>
            <person name="Hauser L."/>
            <person name="Worsham P."/>
            <person name="Chu M."/>
            <person name="Bearden S."/>
            <person name="Garcia E."/>
            <person name="Richardson P."/>
        </authorList>
    </citation>
    <scope>NUCLEOTIDE SEQUENCE [LARGE SCALE GENOMIC DNA]</scope>
    <source>
        <strain>Pestoides F</strain>
    </source>
</reference>
<sequence>MSQSNNVTDLARANIRALTPYMSARRLGGNGDVWLNANEYPLGTEYQLTTQTFNRYPECQPKHVIERYAAYAGLPPEQVLVSRGADEGIELLIRAFCEPGQDAILFCPPTYGMYAVSAETFGVERRTVPAQADWQLDLPAIANNLEQVKVIYVCSPNNPTGNLINPADLQAVLALAQGRAIVAIDEAYIEFCPQASVSNWLKDYPNLVILRTLSKAFALAGLRCGFTLANSDIIQLLLKVIAPYPLSTPVADIAAQALSPKGIEQMRQRVSEVRANRAWLQSALQDCACVEQVFTSESNYLLARFTASSSVFNALWDQGIILRDQNKQPGLANCLRITIGTRQECERVIAALAPLPGIDNSNNIDNQNKTYSQTSSIRKGTI</sequence>
<keyword id="KW-0028">Amino-acid biosynthesis</keyword>
<keyword id="KW-0032">Aminotransferase</keyword>
<keyword id="KW-0368">Histidine biosynthesis</keyword>
<keyword id="KW-0663">Pyridoxal phosphate</keyword>
<keyword id="KW-0808">Transferase</keyword>
<feature type="chain" id="PRO_1000063515" description="Histidinol-phosphate aminotransferase">
    <location>
        <begin position="1"/>
        <end position="382"/>
    </location>
</feature>
<feature type="region of interest" description="Disordered" evidence="2">
    <location>
        <begin position="363"/>
        <end position="382"/>
    </location>
</feature>
<feature type="modified residue" description="N6-(pyridoxal phosphate)lysine" evidence="1">
    <location>
        <position position="215"/>
    </location>
</feature>